<gene>
    <name type="primary">ftcR</name>
    <name type="ordered locus">BAB2_1099</name>
</gene>
<name>FTCR_BRUA2</name>
<feature type="chain" id="PRO_0000319613" description="Flagellar transcriptional regulator FtcR">
    <location>
        <begin position="1"/>
        <end position="227"/>
    </location>
</feature>
<feature type="domain" description="Response regulatory" evidence="2">
    <location>
        <begin position="1"/>
        <end position="116"/>
    </location>
</feature>
<feature type="DNA-binding region" description="OmpR/PhoB-type" evidence="3">
    <location>
        <begin position="127"/>
        <end position="226"/>
    </location>
</feature>
<comment type="function">
    <text evidence="1">Required for transcription of flagellar genes.</text>
</comment>
<comment type="miscellaneous">
    <text>There is no cognate histidine kinase partner identified so far for FtcR.</text>
</comment>
<comment type="caution">
    <text evidence="4">Lacks the conserved Asp residue in position 50 usually required for phosphorylation.</text>
</comment>
<accession>Q2YJF8</accession>
<organism>
    <name type="scientific">Brucella abortus (strain 2308)</name>
    <dbReference type="NCBI Taxonomy" id="359391"/>
    <lineage>
        <taxon>Bacteria</taxon>
        <taxon>Pseudomonadati</taxon>
        <taxon>Pseudomonadota</taxon>
        <taxon>Alphaproteobacteria</taxon>
        <taxon>Hyphomicrobiales</taxon>
        <taxon>Brucellaceae</taxon>
        <taxon>Brucella/Ochrobactrum group</taxon>
        <taxon>Brucella</taxon>
    </lineage>
</organism>
<keyword id="KW-0238">DNA-binding</keyword>
<keyword id="KW-1185">Reference proteome</keyword>
<keyword id="KW-0804">Transcription</keyword>
<keyword id="KW-0805">Transcription regulation</keyword>
<protein>
    <recommendedName>
        <fullName>Flagellar transcriptional regulator FtcR</fullName>
    </recommendedName>
</protein>
<dbReference type="EMBL" id="AM040265">
    <property type="protein sequence ID" value="CAJ13265.1"/>
    <property type="molecule type" value="Genomic_DNA"/>
</dbReference>
<dbReference type="RefSeq" id="WP_002966643.1">
    <property type="nucleotide sequence ID" value="NZ_KN046823.1"/>
</dbReference>
<dbReference type="SMR" id="Q2YJF8"/>
<dbReference type="STRING" id="359391.BAB2_1099"/>
<dbReference type="KEGG" id="bmf:BAB2_1099"/>
<dbReference type="PATRIC" id="fig|359391.11.peg.1883"/>
<dbReference type="HOGENOM" id="CLU_1064703_0_0_5"/>
<dbReference type="PhylomeDB" id="Q2YJF8"/>
<dbReference type="PRO" id="PR:Q2YJF8"/>
<dbReference type="Proteomes" id="UP000002719">
    <property type="component" value="Chromosome II"/>
</dbReference>
<dbReference type="GO" id="GO:0005829">
    <property type="term" value="C:cytosol"/>
    <property type="evidence" value="ECO:0007669"/>
    <property type="project" value="TreeGrafter"/>
</dbReference>
<dbReference type="GO" id="GO:0032993">
    <property type="term" value="C:protein-DNA complex"/>
    <property type="evidence" value="ECO:0007669"/>
    <property type="project" value="TreeGrafter"/>
</dbReference>
<dbReference type="GO" id="GO:0000156">
    <property type="term" value="F:phosphorelay response regulator activity"/>
    <property type="evidence" value="ECO:0007669"/>
    <property type="project" value="TreeGrafter"/>
</dbReference>
<dbReference type="GO" id="GO:0000976">
    <property type="term" value="F:transcription cis-regulatory region binding"/>
    <property type="evidence" value="ECO:0007669"/>
    <property type="project" value="TreeGrafter"/>
</dbReference>
<dbReference type="GO" id="GO:0006355">
    <property type="term" value="P:regulation of DNA-templated transcription"/>
    <property type="evidence" value="ECO:0007669"/>
    <property type="project" value="InterPro"/>
</dbReference>
<dbReference type="CDD" id="cd00383">
    <property type="entry name" value="trans_reg_C"/>
    <property type="match status" value="1"/>
</dbReference>
<dbReference type="Gene3D" id="3.40.50.2300">
    <property type="match status" value="1"/>
</dbReference>
<dbReference type="Gene3D" id="1.10.10.10">
    <property type="entry name" value="Winged helix-like DNA-binding domain superfamily/Winged helix DNA-binding domain"/>
    <property type="match status" value="1"/>
</dbReference>
<dbReference type="InterPro" id="IPR011006">
    <property type="entry name" value="CheY-like_superfamily"/>
</dbReference>
<dbReference type="InterPro" id="IPR001867">
    <property type="entry name" value="OmpR/PhoB-type_DNA-bd"/>
</dbReference>
<dbReference type="InterPro" id="IPR016032">
    <property type="entry name" value="Sig_transdc_resp-reg_C-effctor"/>
</dbReference>
<dbReference type="InterPro" id="IPR001789">
    <property type="entry name" value="Sig_transdc_resp-reg_receiver"/>
</dbReference>
<dbReference type="InterPro" id="IPR039420">
    <property type="entry name" value="WalR-like"/>
</dbReference>
<dbReference type="InterPro" id="IPR036388">
    <property type="entry name" value="WH-like_DNA-bd_sf"/>
</dbReference>
<dbReference type="PANTHER" id="PTHR48111">
    <property type="entry name" value="REGULATOR OF RPOS"/>
    <property type="match status" value="1"/>
</dbReference>
<dbReference type="PANTHER" id="PTHR48111:SF67">
    <property type="entry name" value="TRANSCRIPTIONAL REGULATORY PROTEIN TCTD"/>
    <property type="match status" value="1"/>
</dbReference>
<dbReference type="Pfam" id="PF00486">
    <property type="entry name" value="Trans_reg_C"/>
    <property type="match status" value="1"/>
</dbReference>
<dbReference type="SMART" id="SM00862">
    <property type="entry name" value="Trans_reg_C"/>
    <property type="match status" value="1"/>
</dbReference>
<dbReference type="SUPFAM" id="SSF46894">
    <property type="entry name" value="C-terminal effector domain of the bipartite response regulators"/>
    <property type="match status" value="1"/>
</dbReference>
<dbReference type="SUPFAM" id="SSF52172">
    <property type="entry name" value="CheY-like"/>
    <property type="match status" value="1"/>
</dbReference>
<dbReference type="PROSITE" id="PS51755">
    <property type="entry name" value="OMPR_PHOB"/>
    <property type="match status" value="1"/>
</dbReference>
<dbReference type="PROSITE" id="PS50110">
    <property type="entry name" value="RESPONSE_REGULATORY"/>
    <property type="match status" value="1"/>
</dbReference>
<sequence length="227" mass="25738">MIVVVDDRDMVTEGYSSWFGREGITTTGFTPTDFDEWVESVPEQDIMAIEAFLIGECADQHRLPARIRERCKAPVIAVNDRPSLEHTLELFQSGVDDVVRKPVHVREILARINAIRRRAGASATSGADGTQLGPIRVFSDGRDPQINGIDFPLPRRERRILEYLIANRGRRLNKVQIFSAIYGIFDSEVEENVVESHISKLRKKLRGQLGFDPIDSKRFLGYCINIE</sequence>
<reference key="1">
    <citation type="journal article" date="2005" name="Infect. Immun.">
        <title>Whole-genome analyses of speciation events in pathogenic Brucellae.</title>
        <authorList>
            <person name="Chain P.S."/>
            <person name="Comerci D.J."/>
            <person name="Tolmasky M.E."/>
            <person name="Larimer F.W."/>
            <person name="Malfatti S.A."/>
            <person name="Vergez L.M."/>
            <person name="Aguero F."/>
            <person name="Land M.L."/>
            <person name="Ugalde R.A."/>
            <person name="Garcia E."/>
        </authorList>
    </citation>
    <scope>NUCLEOTIDE SEQUENCE [LARGE SCALE GENOMIC DNA]</scope>
    <source>
        <strain>2308</strain>
    </source>
</reference>
<evidence type="ECO:0000250" key="1"/>
<evidence type="ECO:0000255" key="2">
    <source>
        <dbReference type="PROSITE-ProRule" id="PRU00169"/>
    </source>
</evidence>
<evidence type="ECO:0000255" key="3">
    <source>
        <dbReference type="PROSITE-ProRule" id="PRU01091"/>
    </source>
</evidence>
<evidence type="ECO:0000305" key="4"/>
<proteinExistence type="inferred from homology"/>